<dbReference type="EC" id="6.3.5.3" evidence="1"/>
<dbReference type="EC" id="3.5.1.2" evidence="1"/>
<dbReference type="EMBL" id="CP000390">
    <property type="protein sequence ID" value="ABG62675.1"/>
    <property type="molecule type" value="Genomic_DNA"/>
</dbReference>
<dbReference type="SMR" id="Q11IV0"/>
<dbReference type="STRING" id="266779.Meso_1279"/>
<dbReference type="KEGG" id="mes:Meso_1279"/>
<dbReference type="eggNOG" id="COG0047">
    <property type="taxonomic scope" value="Bacteria"/>
</dbReference>
<dbReference type="HOGENOM" id="CLU_001031_3_1_5"/>
<dbReference type="OrthoDB" id="9804441at2"/>
<dbReference type="UniPathway" id="UPA00074">
    <property type="reaction ID" value="UER00128"/>
</dbReference>
<dbReference type="GO" id="GO:0005737">
    <property type="term" value="C:cytoplasm"/>
    <property type="evidence" value="ECO:0007669"/>
    <property type="project" value="UniProtKB-SubCell"/>
</dbReference>
<dbReference type="GO" id="GO:0005524">
    <property type="term" value="F:ATP binding"/>
    <property type="evidence" value="ECO:0007669"/>
    <property type="project" value="UniProtKB-KW"/>
</dbReference>
<dbReference type="GO" id="GO:0004359">
    <property type="term" value="F:glutaminase activity"/>
    <property type="evidence" value="ECO:0007669"/>
    <property type="project" value="UniProtKB-EC"/>
</dbReference>
<dbReference type="GO" id="GO:0004642">
    <property type="term" value="F:phosphoribosylformylglycinamidine synthase activity"/>
    <property type="evidence" value="ECO:0007669"/>
    <property type="project" value="UniProtKB-UniRule"/>
</dbReference>
<dbReference type="GO" id="GO:0006189">
    <property type="term" value="P:'de novo' IMP biosynthetic process"/>
    <property type="evidence" value="ECO:0007669"/>
    <property type="project" value="UniProtKB-UniRule"/>
</dbReference>
<dbReference type="CDD" id="cd01740">
    <property type="entry name" value="GATase1_FGAR_AT"/>
    <property type="match status" value="1"/>
</dbReference>
<dbReference type="Gene3D" id="3.40.50.880">
    <property type="match status" value="1"/>
</dbReference>
<dbReference type="HAMAP" id="MF_00421">
    <property type="entry name" value="PurQ"/>
    <property type="match status" value="1"/>
</dbReference>
<dbReference type="InterPro" id="IPR029062">
    <property type="entry name" value="Class_I_gatase-like"/>
</dbReference>
<dbReference type="InterPro" id="IPR010075">
    <property type="entry name" value="PRibForGlyAmidine_synth_PurQ"/>
</dbReference>
<dbReference type="NCBIfam" id="TIGR01737">
    <property type="entry name" value="FGAM_synth_I"/>
    <property type="match status" value="1"/>
</dbReference>
<dbReference type="NCBIfam" id="NF002957">
    <property type="entry name" value="PRK03619.1"/>
    <property type="match status" value="1"/>
</dbReference>
<dbReference type="PANTHER" id="PTHR47552">
    <property type="entry name" value="PHOSPHORIBOSYLFORMYLGLYCINAMIDINE SYNTHASE SUBUNIT PURQ"/>
    <property type="match status" value="1"/>
</dbReference>
<dbReference type="PANTHER" id="PTHR47552:SF1">
    <property type="entry name" value="PHOSPHORIBOSYLFORMYLGLYCINAMIDINE SYNTHASE SUBUNIT PURQ"/>
    <property type="match status" value="1"/>
</dbReference>
<dbReference type="Pfam" id="PF13507">
    <property type="entry name" value="GATase_5"/>
    <property type="match status" value="1"/>
</dbReference>
<dbReference type="PIRSF" id="PIRSF001586">
    <property type="entry name" value="FGAM_synth_I"/>
    <property type="match status" value="1"/>
</dbReference>
<dbReference type="SMART" id="SM01211">
    <property type="entry name" value="GATase_5"/>
    <property type="match status" value="1"/>
</dbReference>
<dbReference type="SUPFAM" id="SSF52317">
    <property type="entry name" value="Class I glutamine amidotransferase-like"/>
    <property type="match status" value="1"/>
</dbReference>
<dbReference type="PROSITE" id="PS51273">
    <property type="entry name" value="GATASE_TYPE_1"/>
    <property type="match status" value="1"/>
</dbReference>
<reference key="1">
    <citation type="submission" date="2006-06" db="EMBL/GenBank/DDBJ databases">
        <title>Complete sequence of chromosome of Mesorhizobium sp. BNC1.</title>
        <authorList>
            <consortium name="US DOE Joint Genome Institute"/>
            <person name="Copeland A."/>
            <person name="Lucas S."/>
            <person name="Lapidus A."/>
            <person name="Barry K."/>
            <person name="Detter J.C."/>
            <person name="Glavina del Rio T."/>
            <person name="Hammon N."/>
            <person name="Israni S."/>
            <person name="Dalin E."/>
            <person name="Tice H."/>
            <person name="Pitluck S."/>
            <person name="Chertkov O."/>
            <person name="Brettin T."/>
            <person name="Bruce D."/>
            <person name="Han C."/>
            <person name="Tapia R."/>
            <person name="Gilna P."/>
            <person name="Schmutz J."/>
            <person name="Larimer F."/>
            <person name="Land M."/>
            <person name="Hauser L."/>
            <person name="Kyrpides N."/>
            <person name="Mikhailova N."/>
            <person name="Richardson P."/>
        </authorList>
    </citation>
    <scope>NUCLEOTIDE SEQUENCE [LARGE SCALE GENOMIC DNA]</scope>
    <source>
        <strain>BNC1</strain>
    </source>
</reference>
<accession>Q11IV0</accession>
<feature type="chain" id="PRO_0000252711" description="Phosphoribosylformylglycinamidine synthase subunit PurQ">
    <location>
        <begin position="1"/>
        <end position="222"/>
    </location>
</feature>
<feature type="domain" description="Glutamine amidotransferase type-1" evidence="1">
    <location>
        <begin position="3"/>
        <end position="222"/>
    </location>
</feature>
<feature type="active site" description="Nucleophile" evidence="1">
    <location>
        <position position="86"/>
    </location>
</feature>
<feature type="active site" evidence="1">
    <location>
        <position position="196"/>
    </location>
</feature>
<feature type="active site" evidence="1">
    <location>
        <position position="198"/>
    </location>
</feature>
<sequence length="222" mass="23334">MKSAVIQLPGLNRDRDMIAALTKISGQAPVTVWQTETELPEVDLIVIPGGFSYGDYLRCGAIAARMPVMKAVAEKAAKGVLVIGVCNGFQILLEAGLLPGALMRNASLKFVCREVKLQVANANTAFTRAYAPGQIIRCPVAHHDGNFFAAPETLARIEGEGQVAFRYAEGTNPNGSINDIAGIVNGAGNVLGLMPHPENLVEAAHGGTDGRALFESVLGRAA</sequence>
<comment type="function">
    <text evidence="1">Part of the phosphoribosylformylglycinamidine synthase complex involved in the purines biosynthetic pathway. Catalyzes the ATP-dependent conversion of formylglycinamide ribonucleotide (FGAR) and glutamine to yield formylglycinamidine ribonucleotide (FGAM) and glutamate. The FGAM synthase complex is composed of three subunits. PurQ produces an ammonia molecule by converting glutamine to glutamate. PurL transfers the ammonia molecule to FGAR to form FGAM in an ATP-dependent manner. PurS interacts with PurQ and PurL and is thought to assist in the transfer of the ammonia molecule from PurQ to PurL.</text>
</comment>
<comment type="catalytic activity">
    <reaction evidence="1">
        <text>N(2)-formyl-N(1)-(5-phospho-beta-D-ribosyl)glycinamide + L-glutamine + ATP + H2O = 2-formamido-N(1)-(5-O-phospho-beta-D-ribosyl)acetamidine + L-glutamate + ADP + phosphate + H(+)</text>
        <dbReference type="Rhea" id="RHEA:17129"/>
        <dbReference type="ChEBI" id="CHEBI:15377"/>
        <dbReference type="ChEBI" id="CHEBI:15378"/>
        <dbReference type="ChEBI" id="CHEBI:29985"/>
        <dbReference type="ChEBI" id="CHEBI:30616"/>
        <dbReference type="ChEBI" id="CHEBI:43474"/>
        <dbReference type="ChEBI" id="CHEBI:58359"/>
        <dbReference type="ChEBI" id="CHEBI:147286"/>
        <dbReference type="ChEBI" id="CHEBI:147287"/>
        <dbReference type="ChEBI" id="CHEBI:456216"/>
        <dbReference type="EC" id="6.3.5.3"/>
    </reaction>
</comment>
<comment type="catalytic activity">
    <reaction evidence="1">
        <text>L-glutamine + H2O = L-glutamate + NH4(+)</text>
        <dbReference type="Rhea" id="RHEA:15889"/>
        <dbReference type="ChEBI" id="CHEBI:15377"/>
        <dbReference type="ChEBI" id="CHEBI:28938"/>
        <dbReference type="ChEBI" id="CHEBI:29985"/>
        <dbReference type="ChEBI" id="CHEBI:58359"/>
        <dbReference type="EC" id="3.5.1.2"/>
    </reaction>
</comment>
<comment type="pathway">
    <text evidence="1">Purine metabolism; IMP biosynthesis via de novo pathway; 5-amino-1-(5-phospho-D-ribosyl)imidazole from N(2)-formyl-N(1)-(5-phospho-D-ribosyl)glycinamide: step 1/2.</text>
</comment>
<comment type="subunit">
    <text evidence="1">Part of the FGAM synthase complex composed of 1 PurL, 1 PurQ and 2 PurS subunits.</text>
</comment>
<comment type="subcellular location">
    <subcellularLocation>
        <location evidence="1">Cytoplasm</location>
    </subcellularLocation>
</comment>
<proteinExistence type="inferred from homology"/>
<organism>
    <name type="scientific">Chelativorans sp. (strain BNC1)</name>
    <dbReference type="NCBI Taxonomy" id="266779"/>
    <lineage>
        <taxon>Bacteria</taxon>
        <taxon>Pseudomonadati</taxon>
        <taxon>Pseudomonadota</taxon>
        <taxon>Alphaproteobacteria</taxon>
        <taxon>Hyphomicrobiales</taxon>
        <taxon>Phyllobacteriaceae</taxon>
        <taxon>Chelativorans</taxon>
    </lineage>
</organism>
<keyword id="KW-0067">ATP-binding</keyword>
<keyword id="KW-0963">Cytoplasm</keyword>
<keyword id="KW-0315">Glutamine amidotransferase</keyword>
<keyword id="KW-0378">Hydrolase</keyword>
<keyword id="KW-0436">Ligase</keyword>
<keyword id="KW-0547">Nucleotide-binding</keyword>
<keyword id="KW-0658">Purine biosynthesis</keyword>
<name>PURQ_CHESB</name>
<gene>
    <name evidence="1" type="primary">purQ</name>
    <name type="ordered locus">Meso_1279</name>
</gene>
<evidence type="ECO:0000255" key="1">
    <source>
        <dbReference type="HAMAP-Rule" id="MF_00421"/>
    </source>
</evidence>
<protein>
    <recommendedName>
        <fullName evidence="1">Phosphoribosylformylglycinamidine synthase subunit PurQ</fullName>
        <shortName evidence="1">FGAM synthase</shortName>
        <ecNumber evidence="1">6.3.5.3</ecNumber>
    </recommendedName>
    <alternativeName>
        <fullName evidence="1">Formylglycinamide ribonucleotide amidotransferase subunit I</fullName>
        <shortName evidence="1">FGAR amidotransferase I</shortName>
        <shortName evidence="1">FGAR-AT I</shortName>
    </alternativeName>
    <alternativeName>
        <fullName evidence="1">Glutaminase PurQ</fullName>
        <ecNumber evidence="1">3.5.1.2</ecNumber>
    </alternativeName>
    <alternativeName>
        <fullName evidence="1">Phosphoribosylformylglycinamidine synthase subunit I</fullName>
    </alternativeName>
</protein>